<proteinExistence type="inferred from homology"/>
<reference key="1">
    <citation type="submission" date="2009-01" db="EMBL/GenBank/DDBJ databases">
        <title>Complete sequence of Chloroflexus sp. Y-400-fl.</title>
        <authorList>
            <consortium name="US DOE Joint Genome Institute"/>
            <person name="Lucas S."/>
            <person name="Copeland A."/>
            <person name="Lapidus A."/>
            <person name="Glavina del Rio T."/>
            <person name="Dalin E."/>
            <person name="Tice H."/>
            <person name="Bruce D."/>
            <person name="Goodwin L."/>
            <person name="Pitluck S."/>
            <person name="Sims D."/>
            <person name="Kiss H."/>
            <person name="Brettin T."/>
            <person name="Detter J.C."/>
            <person name="Han C."/>
            <person name="Larimer F."/>
            <person name="Land M."/>
            <person name="Hauser L."/>
            <person name="Kyrpides N."/>
            <person name="Ovchinnikova G."/>
            <person name="Bryant D.A."/>
            <person name="Richardson P."/>
        </authorList>
    </citation>
    <scope>NUCLEOTIDE SEQUENCE [LARGE SCALE GENOMIC DNA]</scope>
    <source>
        <strain>ATCC 29364 / DSM 637 / Y-400-fl</strain>
    </source>
</reference>
<name>ATPB_CHLSY</name>
<accession>B9LBM0</accession>
<gene>
    <name evidence="1" type="primary">atpD</name>
    <name type="ordered locus">Chy400_3287</name>
</gene>
<keyword id="KW-0066">ATP synthesis</keyword>
<keyword id="KW-0067">ATP-binding</keyword>
<keyword id="KW-1003">Cell membrane</keyword>
<keyword id="KW-0139">CF(1)</keyword>
<keyword id="KW-0375">Hydrogen ion transport</keyword>
<keyword id="KW-0406">Ion transport</keyword>
<keyword id="KW-0472">Membrane</keyword>
<keyword id="KW-0547">Nucleotide-binding</keyword>
<keyword id="KW-1278">Translocase</keyword>
<keyword id="KW-0813">Transport</keyword>
<feature type="chain" id="PRO_1000166579" description="ATP synthase subunit beta">
    <location>
        <begin position="1"/>
        <end position="471"/>
    </location>
</feature>
<feature type="binding site" evidence="1">
    <location>
        <begin position="153"/>
        <end position="160"/>
    </location>
    <ligand>
        <name>ATP</name>
        <dbReference type="ChEBI" id="CHEBI:30616"/>
    </ligand>
</feature>
<evidence type="ECO:0000255" key="1">
    <source>
        <dbReference type="HAMAP-Rule" id="MF_01347"/>
    </source>
</evidence>
<organism>
    <name type="scientific">Chloroflexus aurantiacus (strain ATCC 29364 / DSM 637 / Y-400-fl)</name>
    <dbReference type="NCBI Taxonomy" id="480224"/>
    <lineage>
        <taxon>Bacteria</taxon>
        <taxon>Bacillati</taxon>
        <taxon>Chloroflexota</taxon>
        <taxon>Chloroflexia</taxon>
        <taxon>Chloroflexales</taxon>
        <taxon>Chloroflexineae</taxon>
        <taxon>Chloroflexaceae</taxon>
        <taxon>Chloroflexus</taxon>
    </lineage>
</organism>
<protein>
    <recommendedName>
        <fullName evidence="1">ATP synthase subunit beta</fullName>
        <ecNumber evidence="1">7.1.2.2</ecNumber>
    </recommendedName>
    <alternativeName>
        <fullName evidence="1">ATP synthase F1 sector subunit beta</fullName>
    </alternativeName>
    <alternativeName>
        <fullName evidence="1">F-ATPase subunit beta</fullName>
    </alternativeName>
</protein>
<comment type="function">
    <text evidence="1">Produces ATP from ADP in the presence of a proton gradient across the membrane. The catalytic sites are hosted primarily by the beta subunits.</text>
</comment>
<comment type="catalytic activity">
    <reaction evidence="1">
        <text>ATP + H2O + 4 H(+)(in) = ADP + phosphate + 5 H(+)(out)</text>
        <dbReference type="Rhea" id="RHEA:57720"/>
        <dbReference type="ChEBI" id="CHEBI:15377"/>
        <dbReference type="ChEBI" id="CHEBI:15378"/>
        <dbReference type="ChEBI" id="CHEBI:30616"/>
        <dbReference type="ChEBI" id="CHEBI:43474"/>
        <dbReference type="ChEBI" id="CHEBI:456216"/>
        <dbReference type="EC" id="7.1.2.2"/>
    </reaction>
</comment>
<comment type="subunit">
    <text evidence="1">F-type ATPases have 2 components, CF(1) - the catalytic core - and CF(0) - the membrane proton channel. CF(1) has five subunits: alpha(3), beta(3), gamma(1), delta(1), epsilon(1). CF(0) has four main subunits: a(1), b(1), b'(1) and c(9-12).</text>
</comment>
<comment type="subcellular location">
    <subcellularLocation>
        <location evidence="1">Cell membrane</location>
        <topology evidence="1">Peripheral membrane protein</topology>
    </subcellularLocation>
</comment>
<comment type="similarity">
    <text evidence="1">Belongs to the ATPase alpha/beta chains family.</text>
</comment>
<dbReference type="EC" id="7.1.2.2" evidence="1"/>
<dbReference type="EMBL" id="CP001364">
    <property type="protein sequence ID" value="ACM54665.1"/>
    <property type="molecule type" value="Genomic_DNA"/>
</dbReference>
<dbReference type="SMR" id="B9LBM0"/>
<dbReference type="KEGG" id="chl:Chy400_3287"/>
<dbReference type="HOGENOM" id="CLU_022398_0_2_0"/>
<dbReference type="OrthoDB" id="9801639at2"/>
<dbReference type="GO" id="GO:0005886">
    <property type="term" value="C:plasma membrane"/>
    <property type="evidence" value="ECO:0007669"/>
    <property type="project" value="UniProtKB-SubCell"/>
</dbReference>
<dbReference type="GO" id="GO:0045259">
    <property type="term" value="C:proton-transporting ATP synthase complex"/>
    <property type="evidence" value="ECO:0007669"/>
    <property type="project" value="UniProtKB-KW"/>
</dbReference>
<dbReference type="GO" id="GO:0005524">
    <property type="term" value="F:ATP binding"/>
    <property type="evidence" value="ECO:0007669"/>
    <property type="project" value="UniProtKB-UniRule"/>
</dbReference>
<dbReference type="GO" id="GO:0016887">
    <property type="term" value="F:ATP hydrolysis activity"/>
    <property type="evidence" value="ECO:0007669"/>
    <property type="project" value="InterPro"/>
</dbReference>
<dbReference type="GO" id="GO:0046933">
    <property type="term" value="F:proton-transporting ATP synthase activity, rotational mechanism"/>
    <property type="evidence" value="ECO:0007669"/>
    <property type="project" value="UniProtKB-UniRule"/>
</dbReference>
<dbReference type="CDD" id="cd18110">
    <property type="entry name" value="ATP-synt_F1_beta_C"/>
    <property type="match status" value="1"/>
</dbReference>
<dbReference type="CDD" id="cd18115">
    <property type="entry name" value="ATP-synt_F1_beta_N"/>
    <property type="match status" value="1"/>
</dbReference>
<dbReference type="CDD" id="cd01133">
    <property type="entry name" value="F1-ATPase_beta_CD"/>
    <property type="match status" value="1"/>
</dbReference>
<dbReference type="FunFam" id="1.10.1140.10:FF:000001">
    <property type="entry name" value="ATP synthase subunit beta"/>
    <property type="match status" value="1"/>
</dbReference>
<dbReference type="FunFam" id="3.40.50.300:FF:000004">
    <property type="entry name" value="ATP synthase subunit beta"/>
    <property type="match status" value="1"/>
</dbReference>
<dbReference type="Gene3D" id="2.40.10.170">
    <property type="match status" value="1"/>
</dbReference>
<dbReference type="Gene3D" id="1.10.1140.10">
    <property type="entry name" value="Bovine Mitochondrial F1-atpase, Atp Synthase Beta Chain, Chain D, domain 3"/>
    <property type="match status" value="1"/>
</dbReference>
<dbReference type="Gene3D" id="3.40.50.300">
    <property type="entry name" value="P-loop containing nucleotide triphosphate hydrolases"/>
    <property type="match status" value="1"/>
</dbReference>
<dbReference type="HAMAP" id="MF_01347">
    <property type="entry name" value="ATP_synth_beta_bact"/>
    <property type="match status" value="1"/>
</dbReference>
<dbReference type="InterPro" id="IPR003593">
    <property type="entry name" value="AAA+_ATPase"/>
</dbReference>
<dbReference type="InterPro" id="IPR055190">
    <property type="entry name" value="ATP-synt_VA_C"/>
</dbReference>
<dbReference type="InterPro" id="IPR005722">
    <property type="entry name" value="ATP_synth_F1_bsu"/>
</dbReference>
<dbReference type="InterPro" id="IPR020003">
    <property type="entry name" value="ATPase_a/bsu_AS"/>
</dbReference>
<dbReference type="InterPro" id="IPR050053">
    <property type="entry name" value="ATPase_alpha/beta_chains"/>
</dbReference>
<dbReference type="InterPro" id="IPR004100">
    <property type="entry name" value="ATPase_F1/V1/A1_a/bsu_N"/>
</dbReference>
<dbReference type="InterPro" id="IPR036121">
    <property type="entry name" value="ATPase_F1/V1/A1_a/bsu_N_sf"/>
</dbReference>
<dbReference type="InterPro" id="IPR000194">
    <property type="entry name" value="ATPase_F1/V1/A1_a/bsu_nucl-bd"/>
</dbReference>
<dbReference type="InterPro" id="IPR024034">
    <property type="entry name" value="ATPase_F1/V1_b/a_C"/>
</dbReference>
<dbReference type="InterPro" id="IPR027417">
    <property type="entry name" value="P-loop_NTPase"/>
</dbReference>
<dbReference type="NCBIfam" id="TIGR01039">
    <property type="entry name" value="atpD"/>
    <property type="match status" value="1"/>
</dbReference>
<dbReference type="PANTHER" id="PTHR15184">
    <property type="entry name" value="ATP SYNTHASE"/>
    <property type="match status" value="1"/>
</dbReference>
<dbReference type="PANTHER" id="PTHR15184:SF71">
    <property type="entry name" value="ATP SYNTHASE SUBUNIT BETA, MITOCHONDRIAL"/>
    <property type="match status" value="1"/>
</dbReference>
<dbReference type="Pfam" id="PF00006">
    <property type="entry name" value="ATP-synt_ab"/>
    <property type="match status" value="1"/>
</dbReference>
<dbReference type="Pfam" id="PF02874">
    <property type="entry name" value="ATP-synt_ab_N"/>
    <property type="match status" value="1"/>
</dbReference>
<dbReference type="Pfam" id="PF22919">
    <property type="entry name" value="ATP-synt_VA_C"/>
    <property type="match status" value="1"/>
</dbReference>
<dbReference type="SMART" id="SM00382">
    <property type="entry name" value="AAA"/>
    <property type="match status" value="1"/>
</dbReference>
<dbReference type="SUPFAM" id="SSF47917">
    <property type="entry name" value="C-terminal domain of alpha and beta subunits of F1 ATP synthase"/>
    <property type="match status" value="1"/>
</dbReference>
<dbReference type="SUPFAM" id="SSF50615">
    <property type="entry name" value="N-terminal domain of alpha and beta subunits of F1 ATP synthase"/>
    <property type="match status" value="1"/>
</dbReference>
<dbReference type="SUPFAM" id="SSF52540">
    <property type="entry name" value="P-loop containing nucleoside triphosphate hydrolases"/>
    <property type="match status" value="1"/>
</dbReference>
<dbReference type="PROSITE" id="PS00152">
    <property type="entry name" value="ATPASE_ALPHA_BETA"/>
    <property type="match status" value="1"/>
</dbReference>
<sequence>MPAKGVIQEIIGVVIRAKFPEDEVPEIYNAIEIPLGNGDRLVCEVQQQLGNGVVKAVAMGSTDGLRRGLEVIDTGRPIAVPVGPATLGRVFNVLGDPIDGMGPIGPEVERRPIHRDPPSFEEQNTQAQIFETGIKVIDLIAPFTRGGKTAIFGGAGVGKTVVIQELIANIAKEQSGFSVFAGVGERSREGNDLIHEMKEARIDENTTVFDKTVMVFGQMNEPPGARLRVGLTALTMAEYFRDEGRDILLFIDNIFRFVQAGSEVSSLLGRMPSQVGYQPTLGTEMGELQERITSTKRGSITSMQAVYVPADDYTDPAPATVFSHLDATISLERSIAERAIFPAVDPLASTSRILDPNIVGEEHYRVAQEVKRVLQRYKDLKDIIAILGMEELSDEDKLTVQRARKIELFFSQPFTVAQQFTGRPGKYVPVKKTVESFARLLNGEGDHIPESFFYMQGDFDDVLAAYEASQK</sequence>